<comment type="function">
    <text evidence="1">ATP-binding RNA helicase involved in transcription elongation and required for the export of mRNA out of the nucleus. SUB2 also plays a role in pre-mRNA splicing and spliceosome assembly. May be involved in rDNA and telomeric silencing, and maintenance of genome integrity (By similarity).</text>
</comment>
<comment type="catalytic activity">
    <reaction>
        <text>ATP + H2O = ADP + phosphate + H(+)</text>
        <dbReference type="Rhea" id="RHEA:13065"/>
        <dbReference type="ChEBI" id="CHEBI:15377"/>
        <dbReference type="ChEBI" id="CHEBI:15378"/>
        <dbReference type="ChEBI" id="CHEBI:30616"/>
        <dbReference type="ChEBI" id="CHEBI:43474"/>
        <dbReference type="ChEBI" id="CHEBI:456216"/>
        <dbReference type="EC" id="3.6.4.13"/>
    </reaction>
</comment>
<comment type="subcellular location">
    <subcellularLocation>
        <location evidence="1">Nucleus</location>
    </subcellularLocation>
</comment>
<comment type="domain">
    <text>The Q motif is unique to and characteristic of the DEAD box family of RNA helicases and controls ATP binding and hydrolysis.</text>
</comment>
<comment type="similarity">
    <text evidence="5">Belongs to the DEAD box helicase family. DECD subfamily.</text>
</comment>
<accession>Q6BME5</accession>
<accession>Q6BME4</accession>
<keyword id="KW-0067">ATP-binding</keyword>
<keyword id="KW-0347">Helicase</keyword>
<keyword id="KW-0378">Hydrolase</keyword>
<keyword id="KW-0507">mRNA processing</keyword>
<keyword id="KW-0508">mRNA splicing</keyword>
<keyword id="KW-0509">mRNA transport</keyword>
<keyword id="KW-0547">Nucleotide-binding</keyword>
<keyword id="KW-0539">Nucleus</keyword>
<keyword id="KW-1185">Reference proteome</keyword>
<keyword id="KW-0694">RNA-binding</keyword>
<keyword id="KW-0747">Spliceosome</keyword>
<keyword id="KW-0813">Transport</keyword>
<reference key="1">
    <citation type="journal article" date="2004" name="Nature">
        <title>Genome evolution in yeasts.</title>
        <authorList>
            <person name="Dujon B."/>
            <person name="Sherman D."/>
            <person name="Fischer G."/>
            <person name="Durrens P."/>
            <person name="Casaregola S."/>
            <person name="Lafontaine I."/>
            <person name="de Montigny J."/>
            <person name="Marck C."/>
            <person name="Neuveglise C."/>
            <person name="Talla E."/>
            <person name="Goffard N."/>
            <person name="Frangeul L."/>
            <person name="Aigle M."/>
            <person name="Anthouard V."/>
            <person name="Babour A."/>
            <person name="Barbe V."/>
            <person name="Barnay S."/>
            <person name="Blanchin S."/>
            <person name="Beckerich J.-M."/>
            <person name="Beyne E."/>
            <person name="Bleykasten C."/>
            <person name="Boisrame A."/>
            <person name="Boyer J."/>
            <person name="Cattolico L."/>
            <person name="Confanioleri F."/>
            <person name="de Daruvar A."/>
            <person name="Despons L."/>
            <person name="Fabre E."/>
            <person name="Fairhead C."/>
            <person name="Ferry-Dumazet H."/>
            <person name="Groppi A."/>
            <person name="Hantraye F."/>
            <person name="Hennequin C."/>
            <person name="Jauniaux N."/>
            <person name="Joyet P."/>
            <person name="Kachouri R."/>
            <person name="Kerrest A."/>
            <person name="Koszul R."/>
            <person name="Lemaire M."/>
            <person name="Lesur I."/>
            <person name="Ma L."/>
            <person name="Muller H."/>
            <person name="Nicaud J.-M."/>
            <person name="Nikolski M."/>
            <person name="Oztas S."/>
            <person name="Ozier-Kalogeropoulos O."/>
            <person name="Pellenz S."/>
            <person name="Potier S."/>
            <person name="Richard G.-F."/>
            <person name="Straub M.-L."/>
            <person name="Suleau A."/>
            <person name="Swennen D."/>
            <person name="Tekaia F."/>
            <person name="Wesolowski-Louvel M."/>
            <person name="Westhof E."/>
            <person name="Wirth B."/>
            <person name="Zeniou-Meyer M."/>
            <person name="Zivanovic Y."/>
            <person name="Bolotin-Fukuhara M."/>
            <person name="Thierry A."/>
            <person name="Bouchier C."/>
            <person name="Caudron B."/>
            <person name="Scarpelli C."/>
            <person name="Gaillardin C."/>
            <person name="Weissenbach J."/>
            <person name="Wincker P."/>
            <person name="Souciet J.-L."/>
        </authorList>
    </citation>
    <scope>NUCLEOTIDE SEQUENCE [LARGE SCALE GENOMIC DNA]</scope>
    <source>
        <strain>ATCC 36239 / CBS 767 / BCRC 21394 / JCM 1990 / NBRC 0083 / IGC 2968</strain>
    </source>
</reference>
<proteinExistence type="inferred from homology"/>
<dbReference type="EC" id="3.6.4.13"/>
<dbReference type="EMBL" id="CR382138">
    <property type="protein sequence ID" value="CAG88955.2"/>
    <property type="molecule type" value="Genomic_DNA"/>
</dbReference>
<dbReference type="RefSeq" id="XP_460627.2">
    <property type="nucleotide sequence ID" value="XM_460627.2"/>
</dbReference>
<dbReference type="SMR" id="Q6BME5"/>
<dbReference type="FunCoup" id="Q6BME5">
    <property type="interactions" value="1326"/>
</dbReference>
<dbReference type="STRING" id="284592.Q6BME5"/>
<dbReference type="GeneID" id="2903132"/>
<dbReference type="KEGG" id="dha:DEHA2F06138g"/>
<dbReference type="eggNOG" id="KOG0329">
    <property type="taxonomic scope" value="Eukaryota"/>
</dbReference>
<dbReference type="HOGENOM" id="CLU_003041_1_0_1"/>
<dbReference type="InParanoid" id="Q6BME5"/>
<dbReference type="OMA" id="YAHVEPK"/>
<dbReference type="OrthoDB" id="10265785at2759"/>
<dbReference type="Proteomes" id="UP000000599">
    <property type="component" value="Chromosome F"/>
</dbReference>
<dbReference type="GO" id="GO:0000781">
    <property type="term" value="C:chromosome, telomeric region"/>
    <property type="evidence" value="ECO:0007669"/>
    <property type="project" value="EnsemblFungi"/>
</dbReference>
<dbReference type="GO" id="GO:0005681">
    <property type="term" value="C:spliceosomal complex"/>
    <property type="evidence" value="ECO:0007669"/>
    <property type="project" value="UniProtKB-KW"/>
</dbReference>
<dbReference type="GO" id="GO:0000346">
    <property type="term" value="C:transcription export complex"/>
    <property type="evidence" value="ECO:0007669"/>
    <property type="project" value="EnsemblFungi"/>
</dbReference>
<dbReference type="GO" id="GO:0005524">
    <property type="term" value="F:ATP binding"/>
    <property type="evidence" value="ECO:0007669"/>
    <property type="project" value="UniProtKB-KW"/>
</dbReference>
<dbReference type="GO" id="GO:0016887">
    <property type="term" value="F:ATP hydrolysis activity"/>
    <property type="evidence" value="ECO:0007669"/>
    <property type="project" value="RHEA"/>
</dbReference>
<dbReference type="GO" id="GO:0003723">
    <property type="term" value="F:RNA binding"/>
    <property type="evidence" value="ECO:0007669"/>
    <property type="project" value="UniProtKB-KW"/>
</dbReference>
<dbReference type="GO" id="GO:0003724">
    <property type="term" value="F:RNA helicase activity"/>
    <property type="evidence" value="ECO:0007669"/>
    <property type="project" value="UniProtKB-EC"/>
</dbReference>
<dbReference type="GO" id="GO:0031124">
    <property type="term" value="P:mRNA 3'-end processing"/>
    <property type="evidence" value="ECO:0007669"/>
    <property type="project" value="EnsemblFungi"/>
</dbReference>
<dbReference type="GO" id="GO:0006406">
    <property type="term" value="P:mRNA export from nucleus"/>
    <property type="evidence" value="ECO:0007669"/>
    <property type="project" value="EnsemblFungi"/>
</dbReference>
<dbReference type="GO" id="GO:0000398">
    <property type="term" value="P:mRNA splicing, via spliceosome"/>
    <property type="evidence" value="ECO:0007669"/>
    <property type="project" value="EnsemblFungi"/>
</dbReference>
<dbReference type="GO" id="GO:0031509">
    <property type="term" value="P:subtelomeric heterochromatin formation"/>
    <property type="evidence" value="ECO:0007669"/>
    <property type="project" value="EnsemblFungi"/>
</dbReference>
<dbReference type="GO" id="GO:0006368">
    <property type="term" value="P:transcription elongation by RNA polymerase II"/>
    <property type="evidence" value="ECO:0007669"/>
    <property type="project" value="EnsemblFungi"/>
</dbReference>
<dbReference type="GO" id="GO:0006283">
    <property type="term" value="P:transcription-coupled nucleotide-excision repair"/>
    <property type="evidence" value="ECO:0007669"/>
    <property type="project" value="EnsemblFungi"/>
</dbReference>
<dbReference type="CDD" id="cd17950">
    <property type="entry name" value="DEADc_DDX39"/>
    <property type="match status" value="1"/>
</dbReference>
<dbReference type="CDD" id="cd18787">
    <property type="entry name" value="SF2_C_DEAD"/>
    <property type="match status" value="1"/>
</dbReference>
<dbReference type="FunFam" id="3.40.50.300:FF:000809">
    <property type="entry name" value="ATP-dependent RNA helicase SUB2"/>
    <property type="match status" value="1"/>
</dbReference>
<dbReference type="FunFam" id="3.40.50.300:FF:000111">
    <property type="entry name" value="DEAD-box ATP-dependent RNA helicase"/>
    <property type="match status" value="1"/>
</dbReference>
<dbReference type="Gene3D" id="3.40.50.300">
    <property type="entry name" value="P-loop containing nucleotide triphosphate hydrolases"/>
    <property type="match status" value="2"/>
</dbReference>
<dbReference type="InterPro" id="IPR011545">
    <property type="entry name" value="DEAD/DEAH_box_helicase_dom"/>
</dbReference>
<dbReference type="InterPro" id="IPR014001">
    <property type="entry name" value="Helicase_ATP-bd"/>
</dbReference>
<dbReference type="InterPro" id="IPR001650">
    <property type="entry name" value="Helicase_C-like"/>
</dbReference>
<dbReference type="InterPro" id="IPR027417">
    <property type="entry name" value="P-loop_NTPase"/>
</dbReference>
<dbReference type="InterPro" id="IPR014014">
    <property type="entry name" value="RNA_helicase_DEAD_Q_motif"/>
</dbReference>
<dbReference type="PANTHER" id="PTHR47958">
    <property type="entry name" value="ATP-DEPENDENT RNA HELICASE DBP3"/>
    <property type="match status" value="1"/>
</dbReference>
<dbReference type="Pfam" id="PF00270">
    <property type="entry name" value="DEAD"/>
    <property type="match status" value="1"/>
</dbReference>
<dbReference type="Pfam" id="PF00271">
    <property type="entry name" value="Helicase_C"/>
    <property type="match status" value="1"/>
</dbReference>
<dbReference type="SMART" id="SM00487">
    <property type="entry name" value="DEXDc"/>
    <property type="match status" value="1"/>
</dbReference>
<dbReference type="SMART" id="SM00490">
    <property type="entry name" value="HELICc"/>
    <property type="match status" value="1"/>
</dbReference>
<dbReference type="SUPFAM" id="SSF52540">
    <property type="entry name" value="P-loop containing nucleoside triphosphate hydrolases"/>
    <property type="match status" value="1"/>
</dbReference>
<dbReference type="PROSITE" id="PS51192">
    <property type="entry name" value="HELICASE_ATP_BIND_1"/>
    <property type="match status" value="1"/>
</dbReference>
<dbReference type="PROSITE" id="PS51194">
    <property type="entry name" value="HELICASE_CTER"/>
    <property type="match status" value="1"/>
</dbReference>
<dbReference type="PROSITE" id="PS51195">
    <property type="entry name" value="Q_MOTIF"/>
    <property type="match status" value="1"/>
</dbReference>
<name>SUB2_DEBHA</name>
<evidence type="ECO:0000250" key="1"/>
<evidence type="ECO:0000255" key="2">
    <source>
        <dbReference type="PROSITE-ProRule" id="PRU00541"/>
    </source>
</evidence>
<evidence type="ECO:0000255" key="3">
    <source>
        <dbReference type="PROSITE-ProRule" id="PRU00542"/>
    </source>
</evidence>
<evidence type="ECO:0000256" key="4">
    <source>
        <dbReference type="SAM" id="MobiDB-lite"/>
    </source>
</evidence>
<evidence type="ECO:0000305" key="5"/>
<protein>
    <recommendedName>
        <fullName>ATP-dependent RNA helicase SUB2</fullName>
        <ecNumber>3.6.4.13</ecNumber>
    </recommendedName>
</protein>
<feature type="chain" id="PRO_0000232264" description="ATP-dependent RNA helicase SUB2">
    <location>
        <begin position="1"/>
        <end position="435"/>
    </location>
</feature>
<feature type="domain" description="Helicase ATP-binding" evidence="2">
    <location>
        <begin position="82"/>
        <end position="257"/>
    </location>
</feature>
<feature type="domain" description="Helicase C-terminal" evidence="3">
    <location>
        <begin position="269"/>
        <end position="430"/>
    </location>
</feature>
<feature type="region of interest" description="Disordered" evidence="4">
    <location>
        <begin position="1"/>
        <end position="40"/>
    </location>
</feature>
<feature type="short sequence motif" description="Q motif">
    <location>
        <begin position="51"/>
        <end position="79"/>
    </location>
</feature>
<feature type="short sequence motif" description="DECD box">
    <location>
        <begin position="204"/>
        <end position="207"/>
    </location>
</feature>
<feature type="compositionally biased region" description="Acidic residues" evidence="4">
    <location>
        <begin position="7"/>
        <end position="17"/>
    </location>
</feature>
<feature type="compositionally biased region" description="Low complexity" evidence="4">
    <location>
        <begin position="19"/>
        <end position="33"/>
    </location>
</feature>
<feature type="binding site" evidence="2">
    <location>
        <begin position="95"/>
        <end position="102"/>
    </location>
    <ligand>
        <name>ATP</name>
        <dbReference type="ChEBI" id="CHEBI:30616"/>
    </ligand>
</feature>
<organism>
    <name type="scientific">Debaryomyces hansenii (strain ATCC 36239 / CBS 767 / BCRC 21394 / JCM 1990 / NBRC 0083 / IGC 2968)</name>
    <name type="common">Yeast</name>
    <name type="synonym">Torulaspora hansenii</name>
    <dbReference type="NCBI Taxonomy" id="284592"/>
    <lineage>
        <taxon>Eukaryota</taxon>
        <taxon>Fungi</taxon>
        <taxon>Dikarya</taxon>
        <taxon>Ascomycota</taxon>
        <taxon>Saccharomycotina</taxon>
        <taxon>Pichiomycetes</taxon>
        <taxon>Debaryomycetaceae</taxon>
        <taxon>Debaryomyces</taxon>
    </lineage>
</organism>
<gene>
    <name type="primary">SUB2</name>
    <name type="ordered locus">DEHA2F06138g</name>
</gene>
<sequence length="435" mass="49118">MSHEGQEELLDYSDSEEIAVPTTTAPSAAAGEGANDKEADKKGSYVGIHATGFRDFLLKPELLRAIGDCGFEHPSEVQQVCIPQSILGTDVLCQAKSGLGKTAVFVLSTLQQLDPVPGEISTLVICHTRELAYQIRNEYARFSKYMPDVKTEVFYGGTPITRDLEKLKNKDTCPHIVVATPGRLHALVTEKSIRLNNIKSFVIDECDKVLEAVDMRRDVQDIFRNTPHQKQVMMFSATLSQEIRPVCKKFMQNPLEIYVDDEAKLTLHGLQQYYIKLDEKEKNRKLSDLLDSLEFNQVIIFVRSTQRANELNKLLCSSNFPSIAVHSGLPQEERIERYKSFKEFNKRICVSTDVFGRGIDIERINLAINYDLPNEADQYLHRVGRAGRFGTKGLAVSLVSTKDDEEVLEKIQSRFDVKITEFPEEGVDPSTYMNT</sequence>